<accession>Q9ZE87</accession>
<organism>
    <name type="scientific">Rickettsia prowazekii (strain Madrid E)</name>
    <dbReference type="NCBI Taxonomy" id="272947"/>
    <lineage>
        <taxon>Bacteria</taxon>
        <taxon>Pseudomonadati</taxon>
        <taxon>Pseudomonadota</taxon>
        <taxon>Alphaproteobacteria</taxon>
        <taxon>Rickettsiales</taxon>
        <taxon>Rickettsiaceae</taxon>
        <taxon>Rickettsieae</taxon>
        <taxon>Rickettsia</taxon>
        <taxon>typhus group</taxon>
    </lineage>
</organism>
<feature type="chain" id="PRO_0000178691" description="Probable chromosome-partitioning protein ParB">
    <location>
        <begin position="1"/>
        <end position="286"/>
    </location>
</feature>
<protein>
    <recommendedName>
        <fullName>Probable chromosome-partitioning protein ParB</fullName>
    </recommendedName>
</protein>
<comment type="function">
    <text evidence="1">Involved in chromosome partition. Localize to both poles of the predivisional cell following completion of DNA replication. Binds to the DNA origin of replication (By similarity).</text>
</comment>
<comment type="similarity">
    <text evidence="2">Belongs to the ParB family.</text>
</comment>
<evidence type="ECO:0000250" key="1"/>
<evidence type="ECO:0000305" key="2"/>
<sequence length="286" mass="33054">MVKNKGLGRGLSSLLGEEVLPIESEIVQIINIDKIKPNENQPRKHFEYNKIKELADSILNNGLLQPIIIDNNFQIIVGERRWRACKLAKVLEIPVIIKNFDTRESMEVALIENIQRTDLTVMEEARGFKYLVENFNYTVEKLAERLGKSRSHIANLLRLNNLPQSIQDKLNENILSMGHARCLINHEYAEEIADHIINHDLNVRQTEALVRQWHKNEYKKSSNNNNKVDKLCVKDNVIDNDLELLVKALSKKFGIKITIDNCRLGGKLMFHYKNLEELDLILSKLN</sequence>
<gene>
    <name type="primary">parB</name>
    <name type="ordered locus">RP059</name>
</gene>
<proteinExistence type="inferred from homology"/>
<keyword id="KW-0159">Chromosome partition</keyword>
<keyword id="KW-0238">DNA-binding</keyword>
<keyword id="KW-1185">Reference proteome</keyword>
<dbReference type="EMBL" id="AJ235270">
    <property type="protein sequence ID" value="CAA14530.1"/>
    <property type="molecule type" value="Genomic_DNA"/>
</dbReference>
<dbReference type="PIR" id="C71714">
    <property type="entry name" value="C71714"/>
</dbReference>
<dbReference type="RefSeq" id="NP_220453.1">
    <property type="nucleotide sequence ID" value="NC_000963.1"/>
</dbReference>
<dbReference type="RefSeq" id="WP_004599720.1">
    <property type="nucleotide sequence ID" value="NC_000963.1"/>
</dbReference>
<dbReference type="SMR" id="Q9ZE87"/>
<dbReference type="STRING" id="272947.gene:17555142"/>
<dbReference type="EnsemblBacteria" id="CAA14530">
    <property type="protein sequence ID" value="CAA14530"/>
    <property type="gene ID" value="CAA14530"/>
</dbReference>
<dbReference type="KEGG" id="rpr:RP059"/>
<dbReference type="PATRIC" id="fig|272947.5.peg.60"/>
<dbReference type="eggNOG" id="COG1475">
    <property type="taxonomic scope" value="Bacteria"/>
</dbReference>
<dbReference type="HOGENOM" id="CLU_023853_0_0_5"/>
<dbReference type="OrthoDB" id="9802051at2"/>
<dbReference type="Proteomes" id="UP000002480">
    <property type="component" value="Chromosome"/>
</dbReference>
<dbReference type="GO" id="GO:0005694">
    <property type="term" value="C:chromosome"/>
    <property type="evidence" value="ECO:0007669"/>
    <property type="project" value="TreeGrafter"/>
</dbReference>
<dbReference type="GO" id="GO:0003677">
    <property type="term" value="F:DNA binding"/>
    <property type="evidence" value="ECO:0007669"/>
    <property type="project" value="UniProtKB-KW"/>
</dbReference>
<dbReference type="GO" id="GO:0007059">
    <property type="term" value="P:chromosome segregation"/>
    <property type="evidence" value="ECO:0007669"/>
    <property type="project" value="UniProtKB-KW"/>
</dbReference>
<dbReference type="GO" id="GO:0045881">
    <property type="term" value="P:positive regulation of sporulation resulting in formation of a cellular spore"/>
    <property type="evidence" value="ECO:0007669"/>
    <property type="project" value="TreeGrafter"/>
</dbReference>
<dbReference type="CDD" id="cd16393">
    <property type="entry name" value="SPO0J_N"/>
    <property type="match status" value="1"/>
</dbReference>
<dbReference type="FunFam" id="1.10.10.2830:FF:000001">
    <property type="entry name" value="Chromosome partitioning protein ParB"/>
    <property type="match status" value="1"/>
</dbReference>
<dbReference type="FunFam" id="3.90.1530.30:FF:000001">
    <property type="entry name" value="Chromosome partitioning protein ParB"/>
    <property type="match status" value="1"/>
</dbReference>
<dbReference type="Gene3D" id="1.10.10.2830">
    <property type="match status" value="1"/>
</dbReference>
<dbReference type="Gene3D" id="3.90.1530.30">
    <property type="match status" value="1"/>
</dbReference>
<dbReference type="InterPro" id="IPR050336">
    <property type="entry name" value="Chromosome_partition/occlusion"/>
</dbReference>
<dbReference type="InterPro" id="IPR041468">
    <property type="entry name" value="HTH_ParB/Spo0J"/>
</dbReference>
<dbReference type="InterPro" id="IPR004437">
    <property type="entry name" value="ParB/RepB/Spo0J"/>
</dbReference>
<dbReference type="InterPro" id="IPR003115">
    <property type="entry name" value="ParB/Sulfiredoxin_dom"/>
</dbReference>
<dbReference type="InterPro" id="IPR036086">
    <property type="entry name" value="ParB/Sulfiredoxin_sf"/>
</dbReference>
<dbReference type="InterPro" id="IPR057240">
    <property type="entry name" value="ParB_dimer_C"/>
</dbReference>
<dbReference type="NCBIfam" id="TIGR00180">
    <property type="entry name" value="parB_part"/>
    <property type="match status" value="1"/>
</dbReference>
<dbReference type="PANTHER" id="PTHR33375">
    <property type="entry name" value="CHROMOSOME-PARTITIONING PROTEIN PARB-RELATED"/>
    <property type="match status" value="1"/>
</dbReference>
<dbReference type="PANTHER" id="PTHR33375:SF1">
    <property type="entry name" value="CHROMOSOME-PARTITIONING PROTEIN PARB-RELATED"/>
    <property type="match status" value="1"/>
</dbReference>
<dbReference type="Pfam" id="PF17762">
    <property type="entry name" value="HTH_ParB"/>
    <property type="match status" value="1"/>
</dbReference>
<dbReference type="Pfam" id="PF23552">
    <property type="entry name" value="ParB_dimer"/>
    <property type="match status" value="1"/>
</dbReference>
<dbReference type="Pfam" id="PF02195">
    <property type="entry name" value="ParBc"/>
    <property type="match status" value="1"/>
</dbReference>
<dbReference type="SMART" id="SM00470">
    <property type="entry name" value="ParB"/>
    <property type="match status" value="1"/>
</dbReference>
<dbReference type="SUPFAM" id="SSF109709">
    <property type="entry name" value="KorB DNA-binding domain-like"/>
    <property type="match status" value="1"/>
</dbReference>
<dbReference type="SUPFAM" id="SSF110849">
    <property type="entry name" value="ParB/Sulfiredoxin"/>
    <property type="match status" value="1"/>
</dbReference>
<reference key="1">
    <citation type="journal article" date="1998" name="Nature">
        <title>The genome sequence of Rickettsia prowazekii and the origin of mitochondria.</title>
        <authorList>
            <person name="Andersson S.G.E."/>
            <person name="Zomorodipour A."/>
            <person name="Andersson J.O."/>
            <person name="Sicheritz-Ponten T."/>
            <person name="Alsmark U.C.M."/>
            <person name="Podowski R.M."/>
            <person name="Naeslund A.K."/>
            <person name="Eriksson A.-S."/>
            <person name="Winkler H.H."/>
            <person name="Kurland C.G."/>
        </authorList>
    </citation>
    <scope>NUCLEOTIDE SEQUENCE [LARGE SCALE GENOMIC DNA]</scope>
    <source>
        <strain>Madrid E</strain>
    </source>
</reference>
<name>PARB_RICPR</name>